<comment type="similarity">
    <text evidence="2">Belongs to the UPF0213 family.</text>
</comment>
<protein>
    <recommendedName>
        <fullName>UPF0213 protein BCE_0033</fullName>
    </recommendedName>
</protein>
<gene>
    <name type="ordered locus">BCE_0033</name>
</gene>
<proteinExistence type="inferred from homology"/>
<accession>Q73FH3</accession>
<reference key="1">
    <citation type="journal article" date="2004" name="Nucleic Acids Res.">
        <title>The genome sequence of Bacillus cereus ATCC 10987 reveals metabolic adaptations and a large plasmid related to Bacillus anthracis pXO1.</title>
        <authorList>
            <person name="Rasko D.A."/>
            <person name="Ravel J."/>
            <person name="Oekstad O.A."/>
            <person name="Helgason E."/>
            <person name="Cer R.Z."/>
            <person name="Jiang L."/>
            <person name="Shores K.A."/>
            <person name="Fouts D.E."/>
            <person name="Tourasse N.J."/>
            <person name="Angiuoli S.V."/>
            <person name="Kolonay J.F."/>
            <person name="Nelson W.C."/>
            <person name="Kolstoe A.-B."/>
            <person name="Fraser C.M."/>
            <person name="Read T.D."/>
        </authorList>
    </citation>
    <scope>NUCLEOTIDE SEQUENCE [LARGE SCALE GENOMIC DNA]</scope>
    <source>
        <strain>ATCC 10987 / NRS 248</strain>
    </source>
</reference>
<evidence type="ECO:0000255" key="1">
    <source>
        <dbReference type="PROSITE-ProRule" id="PRU00977"/>
    </source>
</evidence>
<evidence type="ECO:0000305" key="2"/>
<feature type="chain" id="PRO_0000161351" description="UPF0213 protein BCE_0033">
    <location>
        <begin position="1"/>
        <end position="96"/>
    </location>
</feature>
<feature type="domain" description="GIY-YIG" evidence="1">
    <location>
        <begin position="4"/>
        <end position="79"/>
    </location>
</feature>
<name>Y033_BACC1</name>
<dbReference type="EMBL" id="AE017194">
    <property type="protein sequence ID" value="AAS38969.1"/>
    <property type="molecule type" value="Genomic_DNA"/>
</dbReference>
<dbReference type="SMR" id="Q73FH3"/>
<dbReference type="KEGG" id="bca:BCE_0033"/>
<dbReference type="HOGENOM" id="CLU_135650_0_3_9"/>
<dbReference type="Proteomes" id="UP000002527">
    <property type="component" value="Chromosome"/>
</dbReference>
<dbReference type="CDD" id="cd10456">
    <property type="entry name" value="GIY-YIG_UPF0213"/>
    <property type="match status" value="1"/>
</dbReference>
<dbReference type="Gene3D" id="3.40.1440.10">
    <property type="entry name" value="GIY-YIG endonuclease"/>
    <property type="match status" value="1"/>
</dbReference>
<dbReference type="InterPro" id="IPR000305">
    <property type="entry name" value="GIY-YIG_endonuc"/>
</dbReference>
<dbReference type="InterPro" id="IPR035901">
    <property type="entry name" value="GIY-YIG_endonuc_sf"/>
</dbReference>
<dbReference type="InterPro" id="IPR050190">
    <property type="entry name" value="UPF0213_domain"/>
</dbReference>
<dbReference type="PANTHER" id="PTHR34477">
    <property type="entry name" value="UPF0213 PROTEIN YHBQ"/>
    <property type="match status" value="1"/>
</dbReference>
<dbReference type="PANTHER" id="PTHR34477:SF1">
    <property type="entry name" value="UPF0213 PROTEIN YHBQ"/>
    <property type="match status" value="1"/>
</dbReference>
<dbReference type="Pfam" id="PF01541">
    <property type="entry name" value="GIY-YIG"/>
    <property type="match status" value="1"/>
</dbReference>
<dbReference type="SUPFAM" id="SSF82771">
    <property type="entry name" value="GIY-YIG endonuclease"/>
    <property type="match status" value="1"/>
</dbReference>
<dbReference type="PROSITE" id="PS50164">
    <property type="entry name" value="GIY_YIG"/>
    <property type="match status" value="1"/>
</dbReference>
<organism>
    <name type="scientific">Bacillus cereus (strain ATCC 10987 / NRS 248)</name>
    <dbReference type="NCBI Taxonomy" id="222523"/>
    <lineage>
        <taxon>Bacteria</taxon>
        <taxon>Bacillati</taxon>
        <taxon>Bacillota</taxon>
        <taxon>Bacilli</taxon>
        <taxon>Bacillales</taxon>
        <taxon>Bacillaceae</taxon>
        <taxon>Bacillus</taxon>
        <taxon>Bacillus cereus group</taxon>
    </lineage>
</organism>
<sequence length="96" mass="11446">MEKNKHCFYVVECSDGSYYAGYTNHIEKRIETHNSGKGAKYTRARLPVALKYVEFHEDKRTAMQAEYYFKQLNRKQKEEYMQKGEPYVATKKFSTK</sequence>